<sequence>MAKTIQAIRGMNDCLPTQSPLWQKLEGAVKNVISAYGYNEMRMPIVEMTHLFSRAIGEVTDVVEKEMYTFEDRNGDSLTLRPEGTAGCVRAGIENGLLYNQEQRVWYMGPMFRHERPQKGRYRQFHQCGVEVFGLNGPDVDAELIMMTARLWRELGIDKHVRLELNSIGSLEARANYRTALIAFLEQHIDVLDEDCKRRMHTNPLRVLDTKNPDVQAILGDAPRLSDYLDPESTQHFAGLCELLDAAGIEYTVNERLVRGLDYYNRTVFEWITESLGSQGTVCGGGRYDGLVEQLGGKATPAVGFAMGLERLVLMLETLELTDVRRSVDVYVVTAGEGTMMAGMKLAEQVREAIPGVRVMNHFGGGNFKKQFKRADKVGAVVALVLGENEVADNTVVLKDLAGGEQVTYSQQEIASKIAELI</sequence>
<gene>
    <name evidence="1" type="primary">hisS</name>
    <name type="ordered locus">VV1_0426</name>
</gene>
<keyword id="KW-0030">Aminoacyl-tRNA synthetase</keyword>
<keyword id="KW-0067">ATP-binding</keyword>
<keyword id="KW-0963">Cytoplasm</keyword>
<keyword id="KW-0436">Ligase</keyword>
<keyword id="KW-0547">Nucleotide-binding</keyword>
<keyword id="KW-0648">Protein biosynthesis</keyword>
<comment type="catalytic activity">
    <reaction evidence="1">
        <text>tRNA(His) + L-histidine + ATP = L-histidyl-tRNA(His) + AMP + diphosphate + H(+)</text>
        <dbReference type="Rhea" id="RHEA:17313"/>
        <dbReference type="Rhea" id="RHEA-COMP:9665"/>
        <dbReference type="Rhea" id="RHEA-COMP:9689"/>
        <dbReference type="ChEBI" id="CHEBI:15378"/>
        <dbReference type="ChEBI" id="CHEBI:30616"/>
        <dbReference type="ChEBI" id="CHEBI:33019"/>
        <dbReference type="ChEBI" id="CHEBI:57595"/>
        <dbReference type="ChEBI" id="CHEBI:78442"/>
        <dbReference type="ChEBI" id="CHEBI:78527"/>
        <dbReference type="ChEBI" id="CHEBI:456215"/>
        <dbReference type="EC" id="6.1.1.21"/>
    </reaction>
</comment>
<comment type="subunit">
    <text evidence="1">Homodimer.</text>
</comment>
<comment type="subcellular location">
    <subcellularLocation>
        <location evidence="1">Cytoplasm</location>
    </subcellularLocation>
</comment>
<comment type="similarity">
    <text evidence="1">Belongs to the class-II aminoacyl-tRNA synthetase family.</text>
</comment>
<reference key="1">
    <citation type="submission" date="2002-12" db="EMBL/GenBank/DDBJ databases">
        <title>Complete genome sequence of Vibrio vulnificus CMCP6.</title>
        <authorList>
            <person name="Rhee J.H."/>
            <person name="Kim S.Y."/>
            <person name="Chung S.S."/>
            <person name="Kim J.J."/>
            <person name="Moon Y.H."/>
            <person name="Jeong H."/>
            <person name="Choy H.E."/>
        </authorList>
    </citation>
    <scope>NUCLEOTIDE SEQUENCE [LARGE SCALE GENOMIC DNA]</scope>
    <source>
        <strain>CMCP6</strain>
    </source>
</reference>
<proteinExistence type="inferred from homology"/>
<organism>
    <name type="scientific">Vibrio vulnificus (strain CMCP6)</name>
    <dbReference type="NCBI Taxonomy" id="216895"/>
    <lineage>
        <taxon>Bacteria</taxon>
        <taxon>Pseudomonadati</taxon>
        <taxon>Pseudomonadota</taxon>
        <taxon>Gammaproteobacteria</taxon>
        <taxon>Vibrionales</taxon>
        <taxon>Vibrionaceae</taxon>
        <taxon>Vibrio</taxon>
    </lineage>
</organism>
<dbReference type="EC" id="6.1.1.21" evidence="1"/>
<dbReference type="EMBL" id="AE016795">
    <property type="protein sequence ID" value="AAO08949.2"/>
    <property type="molecule type" value="Genomic_DNA"/>
</dbReference>
<dbReference type="RefSeq" id="WP_011078525.1">
    <property type="nucleotide sequence ID" value="NC_004459.3"/>
</dbReference>
<dbReference type="SMR" id="Q8DEZ9"/>
<dbReference type="KEGG" id="vvu:VV1_0426"/>
<dbReference type="HOGENOM" id="CLU_025113_1_1_6"/>
<dbReference type="Proteomes" id="UP000002275">
    <property type="component" value="Chromosome 1"/>
</dbReference>
<dbReference type="GO" id="GO:0005737">
    <property type="term" value="C:cytoplasm"/>
    <property type="evidence" value="ECO:0007669"/>
    <property type="project" value="UniProtKB-SubCell"/>
</dbReference>
<dbReference type="GO" id="GO:0005524">
    <property type="term" value="F:ATP binding"/>
    <property type="evidence" value="ECO:0007669"/>
    <property type="project" value="UniProtKB-UniRule"/>
</dbReference>
<dbReference type="GO" id="GO:0004821">
    <property type="term" value="F:histidine-tRNA ligase activity"/>
    <property type="evidence" value="ECO:0007669"/>
    <property type="project" value="UniProtKB-UniRule"/>
</dbReference>
<dbReference type="GO" id="GO:0006427">
    <property type="term" value="P:histidyl-tRNA aminoacylation"/>
    <property type="evidence" value="ECO:0007669"/>
    <property type="project" value="UniProtKB-UniRule"/>
</dbReference>
<dbReference type="CDD" id="cd00773">
    <property type="entry name" value="HisRS-like_core"/>
    <property type="match status" value="1"/>
</dbReference>
<dbReference type="CDD" id="cd00859">
    <property type="entry name" value="HisRS_anticodon"/>
    <property type="match status" value="1"/>
</dbReference>
<dbReference type="FunFam" id="3.30.930.10:FF:000005">
    <property type="entry name" value="Histidine--tRNA ligase"/>
    <property type="match status" value="1"/>
</dbReference>
<dbReference type="Gene3D" id="3.40.50.800">
    <property type="entry name" value="Anticodon-binding domain"/>
    <property type="match status" value="1"/>
</dbReference>
<dbReference type="Gene3D" id="3.30.930.10">
    <property type="entry name" value="Bira Bifunctional Protein, Domain 2"/>
    <property type="match status" value="1"/>
</dbReference>
<dbReference type="HAMAP" id="MF_00127">
    <property type="entry name" value="His_tRNA_synth"/>
    <property type="match status" value="1"/>
</dbReference>
<dbReference type="InterPro" id="IPR006195">
    <property type="entry name" value="aa-tRNA-synth_II"/>
</dbReference>
<dbReference type="InterPro" id="IPR045864">
    <property type="entry name" value="aa-tRNA-synth_II/BPL/LPL"/>
</dbReference>
<dbReference type="InterPro" id="IPR004154">
    <property type="entry name" value="Anticodon-bd"/>
</dbReference>
<dbReference type="InterPro" id="IPR036621">
    <property type="entry name" value="Anticodon-bd_dom_sf"/>
</dbReference>
<dbReference type="InterPro" id="IPR015807">
    <property type="entry name" value="His-tRNA-ligase"/>
</dbReference>
<dbReference type="InterPro" id="IPR041715">
    <property type="entry name" value="HisRS-like_core"/>
</dbReference>
<dbReference type="InterPro" id="IPR004516">
    <property type="entry name" value="HisRS/HisZ"/>
</dbReference>
<dbReference type="InterPro" id="IPR033656">
    <property type="entry name" value="HisRS_anticodon"/>
</dbReference>
<dbReference type="NCBIfam" id="TIGR00442">
    <property type="entry name" value="hisS"/>
    <property type="match status" value="1"/>
</dbReference>
<dbReference type="PANTHER" id="PTHR43707:SF1">
    <property type="entry name" value="HISTIDINE--TRNA LIGASE, MITOCHONDRIAL-RELATED"/>
    <property type="match status" value="1"/>
</dbReference>
<dbReference type="PANTHER" id="PTHR43707">
    <property type="entry name" value="HISTIDYL-TRNA SYNTHETASE"/>
    <property type="match status" value="1"/>
</dbReference>
<dbReference type="Pfam" id="PF03129">
    <property type="entry name" value="HGTP_anticodon"/>
    <property type="match status" value="1"/>
</dbReference>
<dbReference type="Pfam" id="PF13393">
    <property type="entry name" value="tRNA-synt_His"/>
    <property type="match status" value="1"/>
</dbReference>
<dbReference type="PIRSF" id="PIRSF001549">
    <property type="entry name" value="His-tRNA_synth"/>
    <property type="match status" value="1"/>
</dbReference>
<dbReference type="SUPFAM" id="SSF52954">
    <property type="entry name" value="Class II aaRS ABD-related"/>
    <property type="match status" value="1"/>
</dbReference>
<dbReference type="SUPFAM" id="SSF55681">
    <property type="entry name" value="Class II aaRS and biotin synthetases"/>
    <property type="match status" value="1"/>
</dbReference>
<dbReference type="PROSITE" id="PS50862">
    <property type="entry name" value="AA_TRNA_LIGASE_II"/>
    <property type="match status" value="1"/>
</dbReference>
<accession>Q8DEZ9</accession>
<name>SYH_VIBVU</name>
<protein>
    <recommendedName>
        <fullName evidence="1">Histidine--tRNA ligase</fullName>
        <ecNumber evidence="1">6.1.1.21</ecNumber>
    </recommendedName>
    <alternativeName>
        <fullName evidence="1">Histidyl-tRNA synthetase</fullName>
        <shortName evidence="1">HisRS</shortName>
    </alternativeName>
</protein>
<evidence type="ECO:0000255" key="1">
    <source>
        <dbReference type="HAMAP-Rule" id="MF_00127"/>
    </source>
</evidence>
<feature type="chain" id="PRO_0000136293" description="Histidine--tRNA ligase">
    <location>
        <begin position="1"/>
        <end position="422"/>
    </location>
</feature>